<gene>
    <name evidence="1" type="primary">hprK</name>
    <name type="ordered locus">SAV0760</name>
</gene>
<proteinExistence type="inferred from homology"/>
<evidence type="ECO:0000255" key="1">
    <source>
        <dbReference type="HAMAP-Rule" id="MF_01249"/>
    </source>
</evidence>
<dbReference type="EC" id="2.7.11.-" evidence="1"/>
<dbReference type="EC" id="2.7.4.-" evidence="1"/>
<dbReference type="EMBL" id="BA000017">
    <property type="protein sequence ID" value="BAB56922.1"/>
    <property type="molecule type" value="Genomic_DNA"/>
</dbReference>
<dbReference type="RefSeq" id="WP_000958224.1">
    <property type="nucleotide sequence ID" value="NC_002758.2"/>
</dbReference>
<dbReference type="SMR" id="P60700"/>
<dbReference type="KEGG" id="sav:SAV0760"/>
<dbReference type="HOGENOM" id="CLU_052030_0_1_9"/>
<dbReference type="PhylomeDB" id="P60700"/>
<dbReference type="Proteomes" id="UP000002481">
    <property type="component" value="Chromosome"/>
</dbReference>
<dbReference type="GO" id="GO:0005524">
    <property type="term" value="F:ATP binding"/>
    <property type="evidence" value="ECO:0007669"/>
    <property type="project" value="UniProtKB-UniRule"/>
</dbReference>
<dbReference type="GO" id="GO:0000287">
    <property type="term" value="F:magnesium ion binding"/>
    <property type="evidence" value="ECO:0007669"/>
    <property type="project" value="UniProtKB-UniRule"/>
</dbReference>
<dbReference type="GO" id="GO:0000155">
    <property type="term" value="F:phosphorelay sensor kinase activity"/>
    <property type="evidence" value="ECO:0007669"/>
    <property type="project" value="InterPro"/>
</dbReference>
<dbReference type="GO" id="GO:0004674">
    <property type="term" value="F:protein serine/threonine kinase activity"/>
    <property type="evidence" value="ECO:0007669"/>
    <property type="project" value="UniProtKB-KW"/>
</dbReference>
<dbReference type="GO" id="GO:0004712">
    <property type="term" value="F:protein serine/threonine/tyrosine kinase activity"/>
    <property type="evidence" value="ECO:0007669"/>
    <property type="project" value="UniProtKB-UniRule"/>
</dbReference>
<dbReference type="GO" id="GO:0006109">
    <property type="term" value="P:regulation of carbohydrate metabolic process"/>
    <property type="evidence" value="ECO:0007669"/>
    <property type="project" value="UniProtKB-UniRule"/>
</dbReference>
<dbReference type="CDD" id="cd01918">
    <property type="entry name" value="HprK_C"/>
    <property type="match status" value="1"/>
</dbReference>
<dbReference type="FunFam" id="3.40.1390.20:FF:000002">
    <property type="entry name" value="HPr kinase/phosphorylase"/>
    <property type="match status" value="1"/>
</dbReference>
<dbReference type="FunFam" id="3.40.50.300:FF:000174">
    <property type="entry name" value="HPr kinase/phosphorylase"/>
    <property type="match status" value="1"/>
</dbReference>
<dbReference type="Gene3D" id="3.40.1390.20">
    <property type="entry name" value="HprK N-terminal domain-like"/>
    <property type="match status" value="1"/>
</dbReference>
<dbReference type="Gene3D" id="3.40.50.300">
    <property type="entry name" value="P-loop containing nucleotide triphosphate hydrolases"/>
    <property type="match status" value="1"/>
</dbReference>
<dbReference type="HAMAP" id="MF_01249">
    <property type="entry name" value="HPr_kinase"/>
    <property type="match status" value="1"/>
</dbReference>
<dbReference type="InterPro" id="IPR003755">
    <property type="entry name" value="HPr(Ser)_kin/Pase"/>
</dbReference>
<dbReference type="InterPro" id="IPR011104">
    <property type="entry name" value="Hpr_kin/Pase_C"/>
</dbReference>
<dbReference type="InterPro" id="IPR011126">
    <property type="entry name" value="Hpr_kin/Pase_Hpr_N"/>
</dbReference>
<dbReference type="InterPro" id="IPR027417">
    <property type="entry name" value="P-loop_NTPase"/>
</dbReference>
<dbReference type="InterPro" id="IPR028979">
    <property type="entry name" value="Ser_kin/Pase_Hpr-like_N_sf"/>
</dbReference>
<dbReference type="NCBIfam" id="TIGR00679">
    <property type="entry name" value="hpr-ser"/>
    <property type="match status" value="1"/>
</dbReference>
<dbReference type="PANTHER" id="PTHR30305:SF1">
    <property type="entry name" value="HPR KINASE_PHOSPHORYLASE"/>
    <property type="match status" value="1"/>
</dbReference>
<dbReference type="PANTHER" id="PTHR30305">
    <property type="entry name" value="PROTEIN YJDM-RELATED"/>
    <property type="match status" value="1"/>
</dbReference>
<dbReference type="Pfam" id="PF07475">
    <property type="entry name" value="Hpr_kinase_C"/>
    <property type="match status" value="1"/>
</dbReference>
<dbReference type="Pfam" id="PF02603">
    <property type="entry name" value="Hpr_kinase_N"/>
    <property type="match status" value="1"/>
</dbReference>
<dbReference type="SUPFAM" id="SSF75138">
    <property type="entry name" value="HprK N-terminal domain-like"/>
    <property type="match status" value="1"/>
</dbReference>
<dbReference type="SUPFAM" id="SSF53795">
    <property type="entry name" value="PEP carboxykinase-like"/>
    <property type="match status" value="1"/>
</dbReference>
<feature type="chain" id="PRO_0000058982" description="HPr kinase/phosphorylase">
    <location>
        <begin position="1"/>
        <end position="310"/>
    </location>
</feature>
<feature type="region of interest" description="Important for the catalytic mechanism of both phosphorylation and dephosphorylation" evidence="1">
    <location>
        <begin position="199"/>
        <end position="208"/>
    </location>
</feature>
<feature type="region of interest" description="Important for the catalytic mechanism of dephosphorylation" evidence="1">
    <location>
        <begin position="262"/>
        <end position="267"/>
    </location>
</feature>
<feature type="active site" evidence="1">
    <location>
        <position position="136"/>
    </location>
</feature>
<feature type="active site" evidence="1">
    <location>
        <position position="157"/>
    </location>
</feature>
<feature type="active site" description="Proton acceptor; for phosphorylation activity. Proton donor; for dephosphorylation activity" evidence="1">
    <location>
        <position position="175"/>
    </location>
</feature>
<feature type="active site" evidence="1">
    <location>
        <position position="241"/>
    </location>
</feature>
<feature type="binding site" evidence="1">
    <location>
        <begin position="151"/>
        <end position="158"/>
    </location>
    <ligand>
        <name>ATP</name>
        <dbReference type="ChEBI" id="CHEBI:30616"/>
    </ligand>
</feature>
<feature type="binding site" evidence="1">
    <location>
        <position position="158"/>
    </location>
    <ligand>
        <name>Mg(2+)</name>
        <dbReference type="ChEBI" id="CHEBI:18420"/>
    </ligand>
</feature>
<feature type="binding site" evidence="1">
    <location>
        <position position="200"/>
    </location>
    <ligand>
        <name>Mg(2+)</name>
        <dbReference type="ChEBI" id="CHEBI:18420"/>
    </ligand>
</feature>
<name>HPRK_STAAM</name>
<reference key="1">
    <citation type="journal article" date="2001" name="Lancet">
        <title>Whole genome sequencing of meticillin-resistant Staphylococcus aureus.</title>
        <authorList>
            <person name="Kuroda M."/>
            <person name="Ohta T."/>
            <person name="Uchiyama I."/>
            <person name="Baba T."/>
            <person name="Yuzawa H."/>
            <person name="Kobayashi I."/>
            <person name="Cui L."/>
            <person name="Oguchi A."/>
            <person name="Aoki K."/>
            <person name="Nagai Y."/>
            <person name="Lian J.-Q."/>
            <person name="Ito T."/>
            <person name="Kanamori M."/>
            <person name="Matsumaru H."/>
            <person name="Maruyama A."/>
            <person name="Murakami H."/>
            <person name="Hosoyama A."/>
            <person name="Mizutani-Ui Y."/>
            <person name="Takahashi N.K."/>
            <person name="Sawano T."/>
            <person name="Inoue R."/>
            <person name="Kaito C."/>
            <person name="Sekimizu K."/>
            <person name="Hirakawa H."/>
            <person name="Kuhara S."/>
            <person name="Goto S."/>
            <person name="Yabuzaki J."/>
            <person name="Kanehisa M."/>
            <person name="Yamashita A."/>
            <person name="Oshima K."/>
            <person name="Furuya K."/>
            <person name="Yoshino C."/>
            <person name="Shiba T."/>
            <person name="Hattori M."/>
            <person name="Ogasawara N."/>
            <person name="Hayashi H."/>
            <person name="Hiramatsu K."/>
        </authorList>
    </citation>
    <scope>NUCLEOTIDE SEQUENCE [LARGE SCALE GENOMIC DNA]</scope>
    <source>
        <strain>Mu50 / ATCC 700699</strain>
    </source>
</reference>
<keyword id="KW-0067">ATP-binding</keyword>
<keyword id="KW-0119">Carbohydrate metabolism</keyword>
<keyword id="KW-0418">Kinase</keyword>
<keyword id="KW-0460">Magnesium</keyword>
<keyword id="KW-0479">Metal-binding</keyword>
<keyword id="KW-0511">Multifunctional enzyme</keyword>
<keyword id="KW-0547">Nucleotide-binding</keyword>
<keyword id="KW-0723">Serine/threonine-protein kinase</keyword>
<keyword id="KW-0808">Transferase</keyword>
<sequence>MLTTEKLVETLKLDLIAGEEGLSKPIKNADISRPGLEMAGYFSHYASDRIQLLGTTELSFYNLLPDKDRAGRMRKLCRPETPAIIVTRGLQPPEELVEAAKELNTPLIVAKDATTSLMSRLTTFLEHALAKTTSLHGVLVDVYGVGVLITGDSGIGKSETALELVKRGHRLVADDNVEIRQINKDELIGKPPKLIEHLLEIRGLGIINVMTLFGAGSILTEKRIRLNINLENWNKQKLYDRVGLNEETLSILDTEITKKTIPVRPGRNVAVIIEVAAMNYRLNIMGINTAEEFSERLNEEIIKNSHKSEE</sequence>
<comment type="function">
    <text evidence="1">Catalyzes the ATP- as well as the pyrophosphate-dependent phosphorylation of a specific serine residue in HPr, a phosphocarrier protein of the phosphoenolpyruvate-dependent sugar phosphotransferase system (PTS). HprK/P also catalyzes the pyrophosphate-producing, inorganic phosphate-dependent dephosphorylation (phosphorolysis) of seryl-phosphorylated HPr (P-Ser-HPr). The two antagonistic activities of HprK/P are regulated by several intracellular metabolites, which change their concentration in response to the absence or presence of rapidly metabolisable carbon sources (glucose, fructose, etc.) in the growth medium. Therefore, by controlling the phosphorylation state of HPr, HPrK/P is a sensor enzyme that plays a major role in the regulation of carbon metabolism and sugar transport: it mediates carbon catabolite repression (CCR), and regulates PTS-catalyzed carbohydrate uptake and inducer exclusion.</text>
</comment>
<comment type="catalytic activity">
    <reaction evidence="1">
        <text>[HPr protein]-L-serine + ATP = [HPr protein]-O-phospho-L-serine + ADP + H(+)</text>
        <dbReference type="Rhea" id="RHEA:46600"/>
        <dbReference type="Rhea" id="RHEA-COMP:11602"/>
        <dbReference type="Rhea" id="RHEA-COMP:11603"/>
        <dbReference type="ChEBI" id="CHEBI:15378"/>
        <dbReference type="ChEBI" id="CHEBI:29999"/>
        <dbReference type="ChEBI" id="CHEBI:30616"/>
        <dbReference type="ChEBI" id="CHEBI:83421"/>
        <dbReference type="ChEBI" id="CHEBI:456216"/>
    </reaction>
</comment>
<comment type="catalytic activity">
    <reaction evidence="1">
        <text>[HPr protein]-O-phospho-L-serine + phosphate + H(+) = [HPr protein]-L-serine + diphosphate</text>
        <dbReference type="Rhea" id="RHEA:46604"/>
        <dbReference type="Rhea" id="RHEA-COMP:11602"/>
        <dbReference type="Rhea" id="RHEA-COMP:11603"/>
        <dbReference type="ChEBI" id="CHEBI:15378"/>
        <dbReference type="ChEBI" id="CHEBI:29999"/>
        <dbReference type="ChEBI" id="CHEBI:33019"/>
        <dbReference type="ChEBI" id="CHEBI:43474"/>
        <dbReference type="ChEBI" id="CHEBI:83421"/>
    </reaction>
</comment>
<comment type="cofactor">
    <cofactor evidence="1">
        <name>Mg(2+)</name>
        <dbReference type="ChEBI" id="CHEBI:18420"/>
    </cofactor>
</comment>
<comment type="subunit">
    <text evidence="1">Homohexamer.</text>
</comment>
<comment type="domain">
    <text evidence="1">The Walker A ATP-binding motif also binds Pi and PPi.</text>
</comment>
<comment type="miscellaneous">
    <text evidence="1">Both phosphorylation and phosphorolysis are carried out by the same active site and suggest a common mechanism for both reactions.</text>
</comment>
<comment type="similarity">
    <text evidence="1">Belongs to the HPrK/P family.</text>
</comment>
<protein>
    <recommendedName>
        <fullName evidence="1">HPr kinase/phosphorylase</fullName>
        <shortName evidence="1">HPrK/P</shortName>
        <ecNumber evidence="1">2.7.11.-</ecNumber>
        <ecNumber evidence="1">2.7.4.-</ecNumber>
    </recommendedName>
    <alternativeName>
        <fullName evidence="1">HPr(Ser) kinase/phosphorylase</fullName>
    </alternativeName>
</protein>
<organism>
    <name type="scientific">Staphylococcus aureus (strain Mu50 / ATCC 700699)</name>
    <dbReference type="NCBI Taxonomy" id="158878"/>
    <lineage>
        <taxon>Bacteria</taxon>
        <taxon>Bacillati</taxon>
        <taxon>Bacillota</taxon>
        <taxon>Bacilli</taxon>
        <taxon>Bacillales</taxon>
        <taxon>Staphylococcaceae</taxon>
        <taxon>Staphylococcus</taxon>
    </lineage>
</organism>
<accession>P60700</accession>
<accession>Q99VL5</accession>